<accession>Q24618</accession>
<accession>Q28ZQ1</accession>
<accession>Q8STA2</accession>
<dbReference type="EMBL" id="L22554">
    <property type="protein sequence ID" value="AAA28524.1"/>
    <property type="molecule type" value="Genomic_DNA"/>
</dbReference>
<dbReference type="EMBL" id="CM000071">
    <property type="protein sequence ID" value="EAL25562.1"/>
    <property type="status" value="ALT_SEQ"/>
    <property type="molecule type" value="Genomic_DNA"/>
</dbReference>
<dbReference type="EMBL" id="AF476528">
    <property type="protein sequence ID" value="AAL91372.1"/>
    <property type="molecule type" value="Genomic_DNA"/>
</dbReference>
<dbReference type="EMBL" id="AF476529">
    <property type="protein sequence ID" value="AAL91373.1"/>
    <property type="molecule type" value="Genomic_DNA"/>
</dbReference>
<dbReference type="EMBL" id="AF476530">
    <property type="protein sequence ID" value="AAL91374.1"/>
    <property type="molecule type" value="Genomic_DNA"/>
</dbReference>
<dbReference type="EMBL" id="AF476531">
    <property type="protein sequence ID" value="AAL91375.1"/>
    <property type="molecule type" value="Genomic_DNA"/>
</dbReference>
<dbReference type="EMBL" id="AF476532">
    <property type="protein sequence ID" value="AAL91376.1"/>
    <property type="molecule type" value="Genomic_DNA"/>
</dbReference>
<dbReference type="EMBL" id="AF476533">
    <property type="protein sequence ID" value="AAL91377.1"/>
    <property type="molecule type" value="Genomic_DNA"/>
</dbReference>
<dbReference type="EMBL" id="AF476534">
    <property type="protein sequence ID" value="AAL91378.1"/>
    <property type="molecule type" value="Genomic_DNA"/>
</dbReference>
<dbReference type="EMBL" id="AF476535">
    <property type="protein sequence ID" value="AAL91379.1"/>
    <property type="molecule type" value="Genomic_DNA"/>
</dbReference>
<dbReference type="EMBL" id="AF476536">
    <property type="protein sequence ID" value="AAL91380.1"/>
    <property type="molecule type" value="Genomic_DNA"/>
</dbReference>
<dbReference type="EMBL" id="AF476537">
    <property type="protein sequence ID" value="AAL91381.1"/>
    <property type="molecule type" value="Genomic_DNA"/>
</dbReference>
<dbReference type="EMBL" id="AF476538">
    <property type="protein sequence ID" value="AAL91382.1"/>
    <property type="molecule type" value="Genomic_DNA"/>
</dbReference>
<dbReference type="EMBL" id="AF476539">
    <property type="protein sequence ID" value="AAL91383.1"/>
    <property type="molecule type" value="Genomic_DNA"/>
</dbReference>
<dbReference type="EMBL" id="AF476540">
    <property type="protein sequence ID" value="AAL91384.1"/>
    <property type="molecule type" value="Genomic_DNA"/>
</dbReference>
<dbReference type="EMBL" id="AF476541">
    <property type="protein sequence ID" value="AAL91385.1"/>
    <property type="molecule type" value="Genomic_DNA"/>
</dbReference>
<dbReference type="EMBL" id="AF476542">
    <property type="protein sequence ID" value="AAL91386.1"/>
    <property type="molecule type" value="Genomic_DNA"/>
</dbReference>
<dbReference type="EMBL" id="AF476543">
    <property type="protein sequence ID" value="AAL91387.1"/>
    <property type="molecule type" value="Genomic_DNA"/>
</dbReference>
<dbReference type="EMBL" id="AF476544">
    <property type="protein sequence ID" value="AAL91388.1"/>
    <property type="molecule type" value="Genomic_DNA"/>
</dbReference>
<dbReference type="EMBL" id="AF476545">
    <property type="protein sequence ID" value="AAL91389.1"/>
    <property type="molecule type" value="Genomic_DNA"/>
</dbReference>
<dbReference type="EMBL" id="AF476546">
    <property type="protein sequence ID" value="AAL91390.1"/>
    <property type="molecule type" value="Genomic_DNA"/>
</dbReference>
<dbReference type="EMBL" id="AF476547">
    <property type="protein sequence ID" value="AAL91391.1"/>
    <property type="molecule type" value="Genomic_DNA"/>
</dbReference>
<dbReference type="EMBL" id="AF476548">
    <property type="protein sequence ID" value="AAL91392.1"/>
    <property type="molecule type" value="Genomic_DNA"/>
</dbReference>
<dbReference type="EMBL" id="AF476549">
    <property type="protein sequence ID" value="AAL91393.1"/>
    <property type="molecule type" value="Genomic_DNA"/>
</dbReference>
<dbReference type="EMBL" id="AF476550">
    <property type="protein sequence ID" value="AAL91394.1"/>
    <property type="molecule type" value="Genomic_DNA"/>
</dbReference>
<dbReference type="EMBL" id="AF476551">
    <property type="protein sequence ID" value="AAL91395.1"/>
    <property type="molecule type" value="Genomic_DNA"/>
</dbReference>
<dbReference type="EMBL" id="AF476552">
    <property type="protein sequence ID" value="AAL91396.1"/>
    <property type="molecule type" value="Genomic_DNA"/>
</dbReference>
<dbReference type="EMBL" id="AF476553">
    <property type="protein sequence ID" value="AAL91397.1"/>
    <property type="molecule type" value="Genomic_DNA"/>
</dbReference>
<dbReference type="EMBL" id="AF476554">
    <property type="protein sequence ID" value="AAL91398.1"/>
    <property type="molecule type" value="Genomic_DNA"/>
</dbReference>
<dbReference type="EMBL" id="AF476555">
    <property type="protein sequence ID" value="AAL91399.1"/>
    <property type="molecule type" value="Genomic_DNA"/>
</dbReference>
<dbReference type="EMBL" id="AF476556">
    <property type="protein sequence ID" value="AAL91400.1"/>
    <property type="molecule type" value="Genomic_DNA"/>
</dbReference>
<dbReference type="EMBL" id="AF476557">
    <property type="protein sequence ID" value="AAL91401.1"/>
    <property type="molecule type" value="Genomic_DNA"/>
</dbReference>
<dbReference type="EMBL" id="AF476558">
    <property type="protein sequence ID" value="AAL91402.1"/>
    <property type="molecule type" value="Genomic_DNA"/>
</dbReference>
<dbReference type="EMBL" id="AF476559">
    <property type="protein sequence ID" value="AAL91403.1"/>
    <property type="molecule type" value="Genomic_DNA"/>
</dbReference>
<dbReference type="EMBL" id="AF476560">
    <property type="protein sequence ID" value="AAL91404.1"/>
    <property type="molecule type" value="Genomic_DNA"/>
</dbReference>
<dbReference type="EMBL" id="AF476561">
    <property type="protein sequence ID" value="AAL91405.1"/>
    <property type="molecule type" value="Genomic_DNA"/>
</dbReference>
<dbReference type="EMBL" id="AF476562">
    <property type="protein sequence ID" value="AAL91406.1"/>
    <property type="molecule type" value="Genomic_DNA"/>
</dbReference>
<dbReference type="EMBL" id="AF476563">
    <property type="protein sequence ID" value="AAL91407.1"/>
    <property type="molecule type" value="Genomic_DNA"/>
</dbReference>
<dbReference type="EMBL" id="AF476564">
    <property type="protein sequence ID" value="AAL91408.1"/>
    <property type="molecule type" value="Genomic_DNA"/>
</dbReference>
<dbReference type="EMBL" id="AF476565">
    <property type="protein sequence ID" value="AAL91409.1"/>
    <property type="molecule type" value="Genomic_DNA"/>
</dbReference>
<dbReference type="EMBL" id="AF476566">
    <property type="protein sequence ID" value="AAL91410.1"/>
    <property type="molecule type" value="Genomic_DNA"/>
</dbReference>
<dbReference type="EMBL" id="AF476567">
    <property type="protein sequence ID" value="AAL91411.1"/>
    <property type="molecule type" value="Genomic_DNA"/>
</dbReference>
<dbReference type="EMBL" id="AF476568">
    <property type="protein sequence ID" value="AAL91412.1"/>
    <property type="molecule type" value="Genomic_DNA"/>
</dbReference>
<dbReference type="EMBL" id="AF476569">
    <property type="protein sequence ID" value="AAL91413.1"/>
    <property type="molecule type" value="Genomic_DNA"/>
</dbReference>
<dbReference type="EMBL" id="AF476570">
    <property type="protein sequence ID" value="AAL91414.1"/>
    <property type="molecule type" value="Genomic_DNA"/>
</dbReference>
<dbReference type="EMBL" id="AF476571">
    <property type="protein sequence ID" value="AAL91415.1"/>
    <property type="molecule type" value="Genomic_DNA"/>
</dbReference>
<dbReference type="EMBL" id="AF476572">
    <property type="protein sequence ID" value="AAL91416.1"/>
    <property type="molecule type" value="Genomic_DNA"/>
</dbReference>
<dbReference type="EMBL" id="AF476573">
    <property type="protein sequence ID" value="AAL91417.1"/>
    <property type="molecule type" value="Genomic_DNA"/>
</dbReference>
<dbReference type="EMBL" id="AF476574">
    <property type="protein sequence ID" value="AAL91418.1"/>
    <property type="molecule type" value="Genomic_DNA"/>
</dbReference>
<dbReference type="EMBL" id="AF476575">
    <property type="protein sequence ID" value="AAL91419.1"/>
    <property type="molecule type" value="Genomic_DNA"/>
</dbReference>
<dbReference type="EMBL" id="AF476576">
    <property type="protein sequence ID" value="AAL91420.1"/>
    <property type="molecule type" value="Genomic_DNA"/>
</dbReference>
<dbReference type="EMBL" id="AF476577">
    <property type="protein sequence ID" value="AAL91421.1"/>
    <property type="molecule type" value="Genomic_DNA"/>
</dbReference>
<dbReference type="EMBL" id="AF476578">
    <property type="protein sequence ID" value="AAL91422.1"/>
    <property type="molecule type" value="Genomic_DNA"/>
</dbReference>
<dbReference type="EMBL" id="AF476579">
    <property type="protein sequence ID" value="AAL91423.1"/>
    <property type="molecule type" value="Genomic_DNA"/>
</dbReference>
<dbReference type="EMBL" id="AF476580">
    <property type="protein sequence ID" value="AAL91424.1"/>
    <property type="molecule type" value="Genomic_DNA"/>
</dbReference>
<dbReference type="EMBL" id="AF476581">
    <property type="protein sequence ID" value="AAL91425.1"/>
    <property type="molecule type" value="Genomic_DNA"/>
</dbReference>
<dbReference type="EMBL" id="AF476582">
    <property type="protein sequence ID" value="AAL91426.1"/>
    <property type="molecule type" value="Genomic_DNA"/>
</dbReference>
<dbReference type="EMBL" id="AF476583">
    <property type="protein sequence ID" value="AAL91427.1"/>
    <property type="molecule type" value="Genomic_DNA"/>
</dbReference>
<dbReference type="EMBL" id="AF476584">
    <property type="protein sequence ID" value="AAL91428.1"/>
    <property type="molecule type" value="Genomic_DNA"/>
</dbReference>
<dbReference type="EMBL" id="AF476585">
    <property type="protein sequence ID" value="AAL91429.1"/>
    <property type="molecule type" value="Genomic_DNA"/>
</dbReference>
<dbReference type="EMBL" id="AF476586">
    <property type="protein sequence ID" value="AAL91430.1"/>
    <property type="molecule type" value="Genomic_DNA"/>
</dbReference>
<dbReference type="EMBL" id="AF476587">
    <property type="protein sequence ID" value="AAL91431.1"/>
    <property type="molecule type" value="Genomic_DNA"/>
</dbReference>
<dbReference type="EMBL" id="AF476588">
    <property type="protein sequence ID" value="AAL91432.1"/>
    <property type="molecule type" value="Genomic_DNA"/>
</dbReference>
<dbReference type="EMBL" id="AF476589">
    <property type="protein sequence ID" value="AAL91433.1"/>
    <property type="molecule type" value="Genomic_DNA"/>
</dbReference>
<dbReference type="EMBL" id="AF476590">
    <property type="protein sequence ID" value="AAL91434.1"/>
    <property type="molecule type" value="Genomic_DNA"/>
</dbReference>
<dbReference type="EMBL" id="AF476591">
    <property type="protein sequence ID" value="AAL91435.1"/>
    <property type="molecule type" value="Genomic_DNA"/>
</dbReference>
<dbReference type="EMBL" id="AF476592">
    <property type="protein sequence ID" value="AAL91436.1"/>
    <property type="molecule type" value="Genomic_DNA"/>
</dbReference>
<dbReference type="EMBL" id="AF476593">
    <property type="protein sequence ID" value="AAL91437.1"/>
    <property type="molecule type" value="Genomic_DNA"/>
</dbReference>
<dbReference type="EMBL" id="AF476594">
    <property type="protein sequence ID" value="AAL91438.1"/>
    <property type="molecule type" value="Genomic_DNA"/>
</dbReference>
<dbReference type="EMBL" id="AF476595">
    <property type="protein sequence ID" value="AAL91439.1"/>
    <property type="molecule type" value="Genomic_DNA"/>
</dbReference>
<dbReference type="EMBL" id="AF476596">
    <property type="protein sequence ID" value="AAL91440.1"/>
    <property type="molecule type" value="Genomic_DNA"/>
</dbReference>
<dbReference type="EMBL" id="AF476597">
    <property type="protein sequence ID" value="AAL91441.1"/>
    <property type="molecule type" value="Genomic_DNA"/>
</dbReference>
<dbReference type="EMBL" id="AF476598">
    <property type="protein sequence ID" value="AAL91442.1"/>
    <property type="molecule type" value="Genomic_DNA"/>
</dbReference>
<dbReference type="EMBL" id="AF476599">
    <property type="protein sequence ID" value="AAL91443.1"/>
    <property type="molecule type" value="Genomic_DNA"/>
</dbReference>
<dbReference type="EMBL" id="AF476600">
    <property type="protein sequence ID" value="AAL91444.1"/>
    <property type="molecule type" value="Genomic_DNA"/>
</dbReference>
<dbReference type="EMBL" id="AF476601">
    <property type="protein sequence ID" value="AAL91445.1"/>
    <property type="molecule type" value="Genomic_DNA"/>
</dbReference>
<dbReference type="EMBL" id="AF476602">
    <property type="protein sequence ID" value="AAL91446.1"/>
    <property type="molecule type" value="Genomic_DNA"/>
</dbReference>
<dbReference type="EMBL" id="AF476603">
    <property type="protein sequence ID" value="AAL91447.1"/>
    <property type="molecule type" value="Genomic_DNA"/>
</dbReference>
<dbReference type="EMBL" id="AF476604">
    <property type="protein sequence ID" value="AAL91448.1"/>
    <property type="molecule type" value="Genomic_DNA"/>
</dbReference>
<dbReference type="EMBL" id="AF476605">
    <property type="protein sequence ID" value="AAL91449.1"/>
    <property type="molecule type" value="Genomic_DNA"/>
</dbReference>
<dbReference type="EMBL" id="AF476606">
    <property type="protein sequence ID" value="AAL91450.1"/>
    <property type="molecule type" value="Genomic_DNA"/>
</dbReference>
<dbReference type="EMBL" id="AF476607">
    <property type="protein sequence ID" value="AAL91451.1"/>
    <property type="molecule type" value="Genomic_DNA"/>
</dbReference>
<dbReference type="EMBL" id="AF476608">
    <property type="protein sequence ID" value="AAL91452.1"/>
    <property type="molecule type" value="Genomic_DNA"/>
</dbReference>
<dbReference type="EMBL" id="AF476609">
    <property type="protein sequence ID" value="AAL91453.1"/>
    <property type="molecule type" value="Genomic_DNA"/>
</dbReference>
<dbReference type="EMBL" id="AF476610">
    <property type="protein sequence ID" value="AAL91454.1"/>
    <property type="molecule type" value="Genomic_DNA"/>
</dbReference>
<dbReference type="EMBL" id="AF476611">
    <property type="protein sequence ID" value="AAL91455.1"/>
    <property type="molecule type" value="Genomic_DNA"/>
</dbReference>
<dbReference type="EMBL" id="AF476612">
    <property type="protein sequence ID" value="AAL91456.1"/>
    <property type="molecule type" value="Genomic_DNA"/>
</dbReference>
<dbReference type="EMBL" id="AF476613">
    <property type="protein sequence ID" value="AAL91457.1"/>
    <property type="molecule type" value="Genomic_DNA"/>
</dbReference>
<dbReference type="EMBL" id="AF476614">
    <property type="protein sequence ID" value="AAL91458.1"/>
    <property type="molecule type" value="Genomic_DNA"/>
</dbReference>
<dbReference type="EMBL" id="AF476615">
    <property type="protein sequence ID" value="AAL91459.1"/>
    <property type="molecule type" value="Genomic_DNA"/>
</dbReference>
<dbReference type="EMBL" id="AF476616">
    <property type="protein sequence ID" value="AAL91460.1"/>
    <property type="molecule type" value="Genomic_DNA"/>
</dbReference>
<dbReference type="EMBL" id="AF476617">
    <property type="protein sequence ID" value="AAL91461.1"/>
    <property type="molecule type" value="Genomic_DNA"/>
</dbReference>
<dbReference type="EMBL" id="AF476618">
    <property type="protein sequence ID" value="AAL91462.1"/>
    <property type="molecule type" value="Genomic_DNA"/>
</dbReference>
<dbReference type="EMBL" id="AF476619">
    <property type="protein sequence ID" value="AAL91463.1"/>
    <property type="molecule type" value="Genomic_DNA"/>
</dbReference>
<dbReference type="EMBL" id="AF476620">
    <property type="protein sequence ID" value="AAL91464.1"/>
    <property type="molecule type" value="Genomic_DNA"/>
</dbReference>
<dbReference type="EMBL" id="AF476621">
    <property type="protein sequence ID" value="AAL91465.1"/>
    <property type="molecule type" value="Genomic_DNA"/>
</dbReference>
<dbReference type="EMBL" id="AF476622">
    <property type="protein sequence ID" value="AAL91466.1"/>
    <property type="molecule type" value="Genomic_DNA"/>
</dbReference>
<dbReference type="EMBL" id="AF476623">
    <property type="protein sequence ID" value="AAL91467.1"/>
    <property type="molecule type" value="Genomic_DNA"/>
</dbReference>
<dbReference type="EMBL" id="AF476624">
    <property type="protein sequence ID" value="AAL91468.1"/>
    <property type="molecule type" value="Genomic_DNA"/>
</dbReference>
<dbReference type="EMBL" id="AF476625">
    <property type="protein sequence ID" value="AAL91469.1"/>
    <property type="molecule type" value="Genomic_DNA"/>
</dbReference>
<dbReference type="EMBL" id="AF476626">
    <property type="protein sequence ID" value="AAL91470.1"/>
    <property type="molecule type" value="Genomic_DNA"/>
</dbReference>
<dbReference type="EMBL" id="AF476627">
    <property type="protein sequence ID" value="AAL91471.1"/>
    <property type="molecule type" value="Genomic_DNA"/>
</dbReference>
<dbReference type="EMBL" id="AF476628">
    <property type="protein sequence ID" value="AAL91472.1"/>
    <property type="molecule type" value="Genomic_DNA"/>
</dbReference>
<dbReference type="EMBL" id="AF476629">
    <property type="protein sequence ID" value="AAL91473.1"/>
    <property type="molecule type" value="Genomic_DNA"/>
</dbReference>
<dbReference type="EMBL" id="AF476630">
    <property type="protein sequence ID" value="AAL91474.1"/>
    <property type="molecule type" value="Genomic_DNA"/>
</dbReference>
<dbReference type="EMBL" id="AF476631">
    <property type="protein sequence ID" value="AAL91475.1"/>
    <property type="molecule type" value="Genomic_DNA"/>
</dbReference>
<dbReference type="EMBL" id="AF476632">
    <property type="protein sequence ID" value="AAL91476.1"/>
    <property type="molecule type" value="Genomic_DNA"/>
</dbReference>
<dbReference type="PIR" id="S47890">
    <property type="entry name" value="S47890"/>
</dbReference>
<dbReference type="RefSeq" id="XP_001360986.1">
    <property type="nucleotide sequence ID" value="XM_001360949.3"/>
</dbReference>
<dbReference type="RefSeq" id="XP_015039936.1">
    <property type="nucleotide sequence ID" value="XM_015184450.1"/>
</dbReference>
<dbReference type="SMR" id="Q24618"/>
<dbReference type="FunCoup" id="Q24618">
    <property type="interactions" value="73"/>
</dbReference>
<dbReference type="STRING" id="46245.Q24618"/>
<dbReference type="EnsemblMetazoa" id="FBtr0279500">
    <property type="protein sequence ID" value="FBpp0277938"/>
    <property type="gene ID" value="FBgn0243576"/>
</dbReference>
<dbReference type="EnsemblMetazoa" id="FBtr0367479">
    <property type="protein sequence ID" value="FBpp0330423"/>
    <property type="gene ID" value="FBgn0243576"/>
</dbReference>
<dbReference type="KEGG" id="dpo:4804418"/>
<dbReference type="CTD" id="37345"/>
<dbReference type="eggNOG" id="ENOG502QVAD">
    <property type="taxonomic scope" value="Eukaryota"/>
</dbReference>
<dbReference type="HOGENOM" id="CLU_034404_1_0_1"/>
<dbReference type="InParanoid" id="Q24618"/>
<dbReference type="OMA" id="NWLEMLV"/>
<dbReference type="PhylomeDB" id="Q24618"/>
<dbReference type="Proteomes" id="UP000001819">
    <property type="component" value="Chromosome 3"/>
</dbReference>
<dbReference type="Bgee" id="FBgn0243576">
    <property type="expression patterns" value="Expressed in male reproductive system and 2 other cell types or tissues"/>
</dbReference>
<dbReference type="ExpressionAtlas" id="Q24618">
    <property type="expression patterns" value="baseline"/>
</dbReference>
<dbReference type="GO" id="GO:0042803">
    <property type="term" value="F:protein homodimerization activity"/>
    <property type="evidence" value="ECO:0007669"/>
    <property type="project" value="InterPro"/>
</dbReference>
<dbReference type="GO" id="GO:0003723">
    <property type="term" value="F:RNA binding"/>
    <property type="evidence" value="ECO:0007669"/>
    <property type="project" value="UniProtKB-KW"/>
</dbReference>
<dbReference type="GO" id="GO:0045450">
    <property type="term" value="P:bicoid mRNA localization"/>
    <property type="evidence" value="ECO:0007669"/>
    <property type="project" value="InterPro"/>
</dbReference>
<dbReference type="InterPro" id="IPR037998">
    <property type="entry name" value="Exu"/>
</dbReference>
<dbReference type="InterPro" id="IPR054362">
    <property type="entry name" value="Exu_RNase_H-like"/>
</dbReference>
<dbReference type="InterPro" id="IPR040941">
    <property type="entry name" value="SAM_Exu"/>
</dbReference>
<dbReference type="PANTHER" id="PTHR12384">
    <property type="entry name" value="MATERNAL PROTEIN EXUPERANTIA"/>
    <property type="match status" value="1"/>
</dbReference>
<dbReference type="PANTHER" id="PTHR12384:SF2">
    <property type="entry name" value="MATERNAL PROTEIN EXUPERANTIA"/>
    <property type="match status" value="1"/>
</dbReference>
<dbReference type="Pfam" id="PF22123">
    <property type="entry name" value="Exu_RNase_H_like"/>
    <property type="match status" value="1"/>
</dbReference>
<dbReference type="Pfam" id="PF18609">
    <property type="entry name" value="SAM_Exu"/>
    <property type="match status" value="1"/>
</dbReference>
<name>EXU1_DROPS</name>
<protein>
    <recommendedName>
        <fullName>Maternal protein exuperantia-1</fullName>
    </recommendedName>
</protein>
<comment type="function">
    <text evidence="1">Ensures the proper localization of the mRNA of the bicoid gene to the anterior regions of the oocyte thus playing a fundamental role in the establishment of the polarity of the oocyte. May bind the bcd mRNA (By similarity).</text>
</comment>
<comment type="sequence caution" evidence="3">
    <conflict type="erroneous gene model prediction">
        <sequence resource="EMBL-CDS" id="EAL25562"/>
    </conflict>
</comment>
<proteinExistence type="inferred from homology"/>
<reference key="1">
    <citation type="journal article" date="1994" name="Genetics">
        <title>Components acting in localization of bicoid mRNA are conserved among Drosophila species.</title>
        <authorList>
            <person name="Luk S.K.-S."/>
            <person name="Kilpatrick M."/>
            <person name="Kerr K."/>
            <person name="Macdonald P.M."/>
        </authorList>
    </citation>
    <scope>NUCLEOTIDE SEQUENCE [GENOMIC DNA]</scope>
</reference>
<reference key="2">
    <citation type="journal article" date="2005" name="Genome Res.">
        <title>Comparative genome sequencing of Drosophila pseudoobscura: chromosomal, gene, and cis-element evolution.</title>
        <authorList>
            <person name="Richards S."/>
            <person name="Liu Y."/>
            <person name="Bettencourt B.R."/>
            <person name="Hradecky P."/>
            <person name="Letovsky S."/>
            <person name="Nielsen R."/>
            <person name="Thornton K."/>
            <person name="Hubisz M.J."/>
            <person name="Chen R."/>
            <person name="Meisel R.P."/>
            <person name="Couronne O."/>
            <person name="Hua S."/>
            <person name="Smith M.A."/>
            <person name="Zhang P."/>
            <person name="Liu J."/>
            <person name="Bussemaker H.J."/>
            <person name="van Batenburg M.F."/>
            <person name="Howells S.L."/>
            <person name="Scherer S.E."/>
            <person name="Sodergren E."/>
            <person name="Matthews B.B."/>
            <person name="Crosby M.A."/>
            <person name="Schroeder A.J."/>
            <person name="Ortiz-Barrientos D."/>
            <person name="Rives C.M."/>
            <person name="Metzker M.L."/>
            <person name="Muzny D.M."/>
            <person name="Scott G."/>
            <person name="Steffen D."/>
            <person name="Wheeler D.A."/>
            <person name="Worley K.C."/>
            <person name="Havlak P."/>
            <person name="Durbin K.J."/>
            <person name="Egan A."/>
            <person name="Gill R."/>
            <person name="Hume J."/>
            <person name="Morgan M.B."/>
            <person name="Miner G."/>
            <person name="Hamilton C."/>
            <person name="Huang Y."/>
            <person name="Waldron L."/>
            <person name="Verduzco D."/>
            <person name="Clerc-Blankenburg K.P."/>
            <person name="Dubchak I."/>
            <person name="Noor M.A.F."/>
            <person name="Anderson W."/>
            <person name="White K.P."/>
            <person name="Clark A.G."/>
            <person name="Schaeffer S.W."/>
            <person name="Gelbart W.M."/>
            <person name="Weinstock G.M."/>
            <person name="Gibbs R.A."/>
        </authorList>
    </citation>
    <scope>NUCLEOTIDE SEQUENCE [LARGE SCALE GENOMIC DNA]</scope>
    <source>
        <strain>MV2-25 / Tucson 14011-0121.94</strain>
    </source>
</reference>
<reference key="3">
    <citation type="journal article" date="2003" name="Proc. Natl. Acad. Sci. U.S.A.">
        <title>Evolutionary genomics of inversions in Drosophila pseudoobscura: evidence for epistasis.</title>
        <authorList>
            <person name="Schaeffer S.W."/>
            <person name="Goetting-Minesky M.P."/>
            <person name="Kovacevic M."/>
            <person name="Peoples J.R."/>
            <person name="Graybill J.L."/>
            <person name="Miller J.M."/>
            <person name="Kim K."/>
            <person name="Nelson J.G."/>
            <person name="Anderson W.W."/>
        </authorList>
    </citation>
    <scope>NUCLEOTIDE SEQUENCE [GENOMIC DNA] OF 48-124</scope>
</reference>
<organism>
    <name type="scientific">Drosophila pseudoobscura pseudoobscura</name>
    <name type="common">Fruit fly</name>
    <dbReference type="NCBI Taxonomy" id="46245"/>
    <lineage>
        <taxon>Eukaryota</taxon>
        <taxon>Metazoa</taxon>
        <taxon>Ecdysozoa</taxon>
        <taxon>Arthropoda</taxon>
        <taxon>Hexapoda</taxon>
        <taxon>Insecta</taxon>
        <taxon>Pterygota</taxon>
        <taxon>Neoptera</taxon>
        <taxon>Endopterygota</taxon>
        <taxon>Diptera</taxon>
        <taxon>Brachycera</taxon>
        <taxon>Muscomorpha</taxon>
        <taxon>Ephydroidea</taxon>
        <taxon>Drosophilidae</taxon>
        <taxon>Drosophila</taxon>
        <taxon>Sophophora</taxon>
    </lineage>
</organism>
<evidence type="ECO:0000250" key="1"/>
<evidence type="ECO:0000256" key="2">
    <source>
        <dbReference type="SAM" id="MobiDB-lite"/>
    </source>
</evidence>
<evidence type="ECO:0000305" key="3"/>
<gene>
    <name type="primary">exu1</name>
    <name type="ORF">GA21461</name>
</gene>
<feature type="chain" id="PRO_0000087143" description="Maternal protein exuperantia-1">
    <location>
        <begin position="1"/>
        <end position="495"/>
    </location>
</feature>
<feature type="region of interest" description="Disordered" evidence="2">
    <location>
        <begin position="197"/>
        <end position="217"/>
    </location>
</feature>
<feature type="region of interest" description="Disordered" evidence="2">
    <location>
        <begin position="377"/>
        <end position="495"/>
    </location>
</feature>
<feature type="compositionally biased region" description="Polar residues" evidence="2">
    <location>
        <begin position="207"/>
        <end position="216"/>
    </location>
</feature>
<feature type="compositionally biased region" description="Polar residues" evidence="2">
    <location>
        <begin position="398"/>
        <end position="414"/>
    </location>
</feature>
<feature type="sequence conflict" description="In Ref. 1; AAA28524." evidence="3" ref="1">
    <original>D</original>
    <variation>N</variation>
    <location>
        <position position="229"/>
    </location>
</feature>
<feature type="sequence conflict" description="In Ref. 1; AAA28524." evidence="3" ref="1">
    <original>T</original>
    <variation>S</variation>
    <location>
        <position position="424"/>
    </location>
</feature>
<feature type="sequence conflict" description="In Ref. 1; AAA28524." evidence="3" ref="1">
    <original>G</original>
    <variation>S</variation>
    <location>
        <position position="458"/>
    </location>
</feature>
<feature type="sequence conflict" description="In Ref. 1; AAA28524." evidence="3" ref="1">
    <original>E</original>
    <variation>ESL</variation>
    <location>
        <position position="477"/>
    </location>
</feature>
<feature type="sequence conflict" description="In Ref. 1; AAA28524." evidence="3" ref="1">
    <original>S</original>
    <variation>A</variation>
    <location>
        <position position="486"/>
    </location>
</feature>
<keyword id="KW-0217">Developmental protein</keyword>
<keyword id="KW-1185">Reference proteome</keyword>
<keyword id="KW-0694">RNA-binding</keyword>
<sequence>MVAEISKDCVTIAAADQCVDMKEELPAGNYILVGVDVDTTGRRLIDEIVQLAAYTPKDNFQQYIMPYMNLNPAARQRHQIRVISIGFYRMLKSMQTYKIIKSKSEVAALMDFLNWLEMLVAKQPSTDGIVMLYHEERKFIPYMVLEALKKYGLIERFNRTVKSFVNTFNMAKASLGDANLKNCGLRKLSLLLAKSNDESANKENEPENVNRNGSSNDKCHKNGMNQEHDFFEGSANVRAKMVYEVALQLTNSDRTSEPESSEELVNLFNAVKPFAKLVSSDIMELQTQNENMGRQNSFRPVFLNYFRTTLYHRVRAVKFRIVLAENGFTLDSLKAIWTEKRKEGLELALTNIDTLKTEEKTELVELLDSFFDPSKATIKPSFKPNGNGPRRRIRANGAASSKNGAMSSRSTSTEFGAGGDKSQTEGLSAPVPDSTTKSPSPGKTGGRPHRKRNNTRNGFGSAKGPKKAETLNIAAPEPPQSPVAVSTPVAIAATN</sequence>